<comment type="function">
    <text evidence="2">Acyl-CoA synthases catalyze the initial reaction in fatty acid metabolism, by forming a thioester with CoA. Has some preference toward medium-chain substrates. Plays a role in adipocyte differentiation.</text>
</comment>
<comment type="catalytic activity">
    <reaction evidence="2">
        <text>a medium-chain fatty acid + ATP + CoA = a medium-chain fatty acyl-CoA + AMP + diphosphate</text>
        <dbReference type="Rhea" id="RHEA:48340"/>
        <dbReference type="ChEBI" id="CHEBI:30616"/>
        <dbReference type="ChEBI" id="CHEBI:33019"/>
        <dbReference type="ChEBI" id="CHEBI:57287"/>
        <dbReference type="ChEBI" id="CHEBI:59558"/>
        <dbReference type="ChEBI" id="CHEBI:90546"/>
        <dbReference type="ChEBI" id="CHEBI:456215"/>
        <dbReference type="EC" id="6.2.1.2"/>
    </reaction>
</comment>
<comment type="catalytic activity">
    <reaction evidence="2">
        <text>octanoate + ATP + CoA = octanoyl-CoA + AMP + diphosphate</text>
        <dbReference type="Rhea" id="RHEA:33631"/>
        <dbReference type="ChEBI" id="CHEBI:25646"/>
        <dbReference type="ChEBI" id="CHEBI:30616"/>
        <dbReference type="ChEBI" id="CHEBI:33019"/>
        <dbReference type="ChEBI" id="CHEBI:57287"/>
        <dbReference type="ChEBI" id="CHEBI:57386"/>
        <dbReference type="ChEBI" id="CHEBI:456215"/>
    </reaction>
</comment>
<comment type="subcellular location">
    <subcellularLocation>
        <location evidence="4">Mitochondrion</location>
    </subcellularLocation>
</comment>
<comment type="similarity">
    <text evidence="4">Belongs to the ATP-dependent AMP-binding enzyme family.</text>
</comment>
<accession>Q8VCW8</accession>
<accession>Q3TDU9</accession>
<accession>Q3U5G9</accession>
<protein>
    <recommendedName>
        <fullName evidence="4">Medium-chain acyl-CoA ligase ACSF2, mitochondrial</fullName>
        <ecNumber evidence="2">6.2.1.2</ecNumber>
    </recommendedName>
</protein>
<proteinExistence type="evidence at protein level"/>
<name>ACSF2_MOUSE</name>
<sequence length="615" mass="67951">MAVYHGMLRFGRLCIASLGARGPRTLLSRPRPNSKLQSVRALSSGMVNCTNPLPIGGLSYIQGHTDSHLVNTTVGECLDATAQRFPDREALVILHENIRLNFAQLKEEVDKAASGLLSIGLRKGDRLGMWGPNSYAWVLIQLATAQAGIILVSVNPAYQSSELEYVLRKVGCKGIVFPKQFKTQQYYDILKQVCPELEKAQPGALKSERLPDLTTVISVDAPLPGTLLLDDIVAAGGKEQNLAQLRYNQRFLSCYDPINIQFTSGTTGNPKGATLSHHNIVNNSMLIGQRLKMPTKTAEELRLVLPSPLYHCLGSVGGTMVSMMHGATLLLSSPSFNGKKALEAISREKGTLLYGTPTMFVDILNQPDFSSYDFTSIRGGVIAGSPAPPELIRAIINKMNMKELVVVYGTTENSPVTFMNFPEDTLEQKAGSVGRIMPHTEAQIVNVETGELTNLNVPGELYIRGYCVMQGYWGEPQKTFETVGQDKWYRTGDIALMDEQGFCKIVGRSKDMIIRGGENIYPAELEDFFLKHPQVQEAQVVGVKDERMGEEICACIRLKSGETTTAEEIKAFCKGKISHFKIPRYIVFVEGYPLTISGKIQKFKLREQMEQHLKL</sequence>
<evidence type="ECO:0000250" key="1"/>
<evidence type="ECO:0000250" key="2">
    <source>
        <dbReference type="UniProtKB" id="Q96CM8"/>
    </source>
</evidence>
<evidence type="ECO:0000255" key="3"/>
<evidence type="ECO:0000305" key="4"/>
<evidence type="ECO:0000312" key="5">
    <source>
        <dbReference type="MGI" id="MGI:2388287"/>
    </source>
</evidence>
<evidence type="ECO:0007744" key="6">
    <source>
    </source>
</evidence>
<evidence type="ECO:0007744" key="7">
    <source>
    </source>
</evidence>
<feature type="transit peptide" description="Mitochondrion" evidence="3">
    <location>
        <begin position="1"/>
        <end position="41"/>
    </location>
</feature>
<feature type="chain" id="PRO_0000315795" description="Medium-chain acyl-CoA ligase ACSF2, mitochondrial">
    <location>
        <begin position="42"/>
        <end position="615"/>
    </location>
</feature>
<feature type="binding site" evidence="1">
    <location>
        <begin position="263"/>
        <end position="271"/>
    </location>
    <ligand>
        <name>ATP</name>
        <dbReference type="ChEBI" id="CHEBI:30616"/>
    </ligand>
</feature>
<feature type="binding site" evidence="1">
    <location>
        <position position="493"/>
    </location>
    <ligand>
        <name>ATP</name>
        <dbReference type="ChEBI" id="CHEBI:30616"/>
    </ligand>
</feature>
<feature type="binding site" evidence="1">
    <location>
        <position position="508"/>
    </location>
    <ligand>
        <name>ATP</name>
        <dbReference type="ChEBI" id="CHEBI:30616"/>
    </ligand>
</feature>
<feature type="binding site" evidence="1">
    <location>
        <position position="599"/>
    </location>
    <ligand>
        <name>ATP</name>
        <dbReference type="ChEBI" id="CHEBI:30616"/>
    </ligand>
</feature>
<feature type="modified residue" description="N6-acetyllysine" evidence="6">
    <location>
        <position position="179"/>
    </location>
</feature>
<feature type="modified residue" description="N6-acetyllysine; alternate" evidence="6 7">
    <location>
        <position position="182"/>
    </location>
</feature>
<feature type="modified residue" description="N6-succinyllysine; alternate" evidence="7">
    <location>
        <position position="182"/>
    </location>
</feature>
<feature type="modified residue" description="N6-acetyllysine" evidence="6">
    <location>
        <position position="199"/>
    </location>
</feature>
<feature type="modified residue" description="N6-acetyllysine" evidence="6">
    <location>
        <position position="340"/>
    </location>
</feature>
<feature type="modified residue" description="N6-acetyllysine" evidence="6">
    <location>
        <position position="398"/>
    </location>
</feature>
<feature type="modified residue" description="N6-succinyllysine" evidence="7">
    <location>
        <position position="478"/>
    </location>
</feature>
<feature type="modified residue" description="N6-acetyllysine" evidence="6">
    <location>
        <position position="510"/>
    </location>
</feature>
<feature type="modified residue" description="N6-acetyllysine; alternate" evidence="6">
    <location>
        <position position="544"/>
    </location>
</feature>
<feature type="modified residue" description="N6-succinyllysine; alternate" evidence="7">
    <location>
        <position position="544"/>
    </location>
</feature>
<feature type="modified residue" description="N6-acetyllysine; alternate" evidence="6">
    <location>
        <position position="570"/>
    </location>
</feature>
<feature type="modified residue" description="N6-succinyllysine; alternate" evidence="7">
    <location>
        <position position="570"/>
    </location>
</feature>
<feature type="modified residue" description="N6-succinyllysine" evidence="7">
    <location>
        <position position="599"/>
    </location>
</feature>
<feature type="sequence conflict" description="In Ref. 2; BAE32109." evidence="4" ref="2">
    <original>V</original>
    <variation>L</variation>
    <location>
        <position position="176"/>
    </location>
</feature>
<feature type="sequence conflict" description="In Ref. 2; BAE32109." evidence="4" ref="2">
    <original>A</original>
    <variation>G</variation>
    <location>
        <position position="200"/>
    </location>
</feature>
<feature type="sequence conflict" description="In Ref. 2; BAE32109." evidence="4" ref="2">
    <original>D</original>
    <variation>Y</variation>
    <location>
        <position position="231"/>
    </location>
</feature>
<reference key="1">
    <citation type="journal article" date="2005" name="Science">
        <title>The transcriptional landscape of the mammalian genome.</title>
        <authorList>
            <person name="Carninci P."/>
            <person name="Kasukawa T."/>
            <person name="Katayama S."/>
            <person name="Gough J."/>
            <person name="Frith M.C."/>
            <person name="Maeda N."/>
            <person name="Oyama R."/>
            <person name="Ravasi T."/>
            <person name="Lenhard B."/>
            <person name="Wells C."/>
            <person name="Kodzius R."/>
            <person name="Shimokawa K."/>
            <person name="Bajic V.B."/>
            <person name="Brenner S.E."/>
            <person name="Batalov S."/>
            <person name="Forrest A.R."/>
            <person name="Zavolan M."/>
            <person name="Davis M.J."/>
            <person name="Wilming L.G."/>
            <person name="Aidinis V."/>
            <person name="Allen J.E."/>
            <person name="Ambesi-Impiombato A."/>
            <person name="Apweiler R."/>
            <person name="Aturaliya R.N."/>
            <person name="Bailey T.L."/>
            <person name="Bansal M."/>
            <person name="Baxter L."/>
            <person name="Beisel K.W."/>
            <person name="Bersano T."/>
            <person name="Bono H."/>
            <person name="Chalk A.M."/>
            <person name="Chiu K.P."/>
            <person name="Choudhary V."/>
            <person name="Christoffels A."/>
            <person name="Clutterbuck D.R."/>
            <person name="Crowe M.L."/>
            <person name="Dalla E."/>
            <person name="Dalrymple B.P."/>
            <person name="de Bono B."/>
            <person name="Della Gatta G."/>
            <person name="di Bernardo D."/>
            <person name="Down T."/>
            <person name="Engstrom P."/>
            <person name="Fagiolini M."/>
            <person name="Faulkner G."/>
            <person name="Fletcher C.F."/>
            <person name="Fukushima T."/>
            <person name="Furuno M."/>
            <person name="Futaki S."/>
            <person name="Gariboldi M."/>
            <person name="Georgii-Hemming P."/>
            <person name="Gingeras T.R."/>
            <person name="Gojobori T."/>
            <person name="Green R.E."/>
            <person name="Gustincich S."/>
            <person name="Harbers M."/>
            <person name="Hayashi Y."/>
            <person name="Hensch T.K."/>
            <person name="Hirokawa N."/>
            <person name="Hill D."/>
            <person name="Huminiecki L."/>
            <person name="Iacono M."/>
            <person name="Ikeo K."/>
            <person name="Iwama A."/>
            <person name="Ishikawa T."/>
            <person name="Jakt M."/>
            <person name="Kanapin A."/>
            <person name="Katoh M."/>
            <person name="Kawasawa Y."/>
            <person name="Kelso J."/>
            <person name="Kitamura H."/>
            <person name="Kitano H."/>
            <person name="Kollias G."/>
            <person name="Krishnan S.P."/>
            <person name="Kruger A."/>
            <person name="Kummerfeld S.K."/>
            <person name="Kurochkin I.V."/>
            <person name="Lareau L.F."/>
            <person name="Lazarevic D."/>
            <person name="Lipovich L."/>
            <person name="Liu J."/>
            <person name="Liuni S."/>
            <person name="McWilliam S."/>
            <person name="Madan Babu M."/>
            <person name="Madera M."/>
            <person name="Marchionni L."/>
            <person name="Matsuda H."/>
            <person name="Matsuzawa S."/>
            <person name="Miki H."/>
            <person name="Mignone F."/>
            <person name="Miyake S."/>
            <person name="Morris K."/>
            <person name="Mottagui-Tabar S."/>
            <person name="Mulder N."/>
            <person name="Nakano N."/>
            <person name="Nakauchi H."/>
            <person name="Ng P."/>
            <person name="Nilsson R."/>
            <person name="Nishiguchi S."/>
            <person name="Nishikawa S."/>
            <person name="Nori F."/>
            <person name="Ohara O."/>
            <person name="Okazaki Y."/>
            <person name="Orlando V."/>
            <person name="Pang K.C."/>
            <person name="Pavan W.J."/>
            <person name="Pavesi G."/>
            <person name="Pesole G."/>
            <person name="Petrovsky N."/>
            <person name="Piazza S."/>
            <person name="Reed J."/>
            <person name="Reid J.F."/>
            <person name="Ring B.Z."/>
            <person name="Ringwald M."/>
            <person name="Rost B."/>
            <person name="Ruan Y."/>
            <person name="Salzberg S.L."/>
            <person name="Sandelin A."/>
            <person name="Schneider C."/>
            <person name="Schoenbach C."/>
            <person name="Sekiguchi K."/>
            <person name="Semple C.A."/>
            <person name="Seno S."/>
            <person name="Sessa L."/>
            <person name="Sheng Y."/>
            <person name="Shibata Y."/>
            <person name="Shimada H."/>
            <person name="Shimada K."/>
            <person name="Silva D."/>
            <person name="Sinclair B."/>
            <person name="Sperling S."/>
            <person name="Stupka E."/>
            <person name="Sugiura K."/>
            <person name="Sultana R."/>
            <person name="Takenaka Y."/>
            <person name="Taki K."/>
            <person name="Tammoja K."/>
            <person name="Tan S.L."/>
            <person name="Tang S."/>
            <person name="Taylor M.S."/>
            <person name="Tegner J."/>
            <person name="Teichmann S.A."/>
            <person name="Ueda H.R."/>
            <person name="van Nimwegen E."/>
            <person name="Verardo R."/>
            <person name="Wei C.L."/>
            <person name="Yagi K."/>
            <person name="Yamanishi H."/>
            <person name="Zabarovsky E."/>
            <person name="Zhu S."/>
            <person name="Zimmer A."/>
            <person name="Hide W."/>
            <person name="Bult C."/>
            <person name="Grimmond S.M."/>
            <person name="Teasdale R.D."/>
            <person name="Liu E.T."/>
            <person name="Brusic V."/>
            <person name="Quackenbush J."/>
            <person name="Wahlestedt C."/>
            <person name="Mattick J.S."/>
            <person name="Hume D.A."/>
            <person name="Kai C."/>
            <person name="Sasaki D."/>
            <person name="Tomaru Y."/>
            <person name="Fukuda S."/>
            <person name="Kanamori-Katayama M."/>
            <person name="Suzuki M."/>
            <person name="Aoki J."/>
            <person name="Arakawa T."/>
            <person name="Iida J."/>
            <person name="Imamura K."/>
            <person name="Itoh M."/>
            <person name="Kato T."/>
            <person name="Kawaji H."/>
            <person name="Kawagashira N."/>
            <person name="Kawashima T."/>
            <person name="Kojima M."/>
            <person name="Kondo S."/>
            <person name="Konno H."/>
            <person name="Nakano K."/>
            <person name="Ninomiya N."/>
            <person name="Nishio T."/>
            <person name="Okada M."/>
            <person name="Plessy C."/>
            <person name="Shibata K."/>
            <person name="Shiraki T."/>
            <person name="Suzuki S."/>
            <person name="Tagami M."/>
            <person name="Waki K."/>
            <person name="Watahiki A."/>
            <person name="Okamura-Oho Y."/>
            <person name="Suzuki H."/>
            <person name="Kawai J."/>
            <person name="Hayashizaki Y."/>
        </authorList>
    </citation>
    <scope>NUCLEOTIDE SEQUENCE [LARGE SCALE MRNA]</scope>
    <source>
        <strain>C57BL/6J</strain>
        <strain>NOD</strain>
        <tissue>Diencephalon</tissue>
        <tissue>Thymus</tissue>
    </source>
</reference>
<reference key="2">
    <citation type="journal article" date="2009" name="PLoS Biol.">
        <title>Lineage-specific biology revealed by a finished genome assembly of the mouse.</title>
        <authorList>
            <person name="Church D.M."/>
            <person name="Goodstadt L."/>
            <person name="Hillier L.W."/>
            <person name="Zody M.C."/>
            <person name="Goldstein S."/>
            <person name="She X."/>
            <person name="Bult C.J."/>
            <person name="Agarwala R."/>
            <person name="Cherry J.L."/>
            <person name="DiCuccio M."/>
            <person name="Hlavina W."/>
            <person name="Kapustin Y."/>
            <person name="Meric P."/>
            <person name="Maglott D."/>
            <person name="Birtle Z."/>
            <person name="Marques A.C."/>
            <person name="Graves T."/>
            <person name="Zhou S."/>
            <person name="Teague B."/>
            <person name="Potamousis K."/>
            <person name="Churas C."/>
            <person name="Place M."/>
            <person name="Herschleb J."/>
            <person name="Runnheim R."/>
            <person name="Forrest D."/>
            <person name="Amos-Landgraf J."/>
            <person name="Schwartz D.C."/>
            <person name="Cheng Z."/>
            <person name="Lindblad-Toh K."/>
            <person name="Eichler E.E."/>
            <person name="Ponting C.P."/>
        </authorList>
    </citation>
    <scope>NUCLEOTIDE SEQUENCE [LARGE SCALE GENOMIC DNA]</scope>
    <source>
        <strain>C57BL/6J</strain>
    </source>
</reference>
<reference key="3">
    <citation type="journal article" date="2004" name="Genome Res.">
        <title>The status, quality, and expansion of the NIH full-length cDNA project: the Mammalian Gene Collection (MGC).</title>
        <authorList>
            <consortium name="The MGC Project Team"/>
        </authorList>
    </citation>
    <scope>NUCLEOTIDE SEQUENCE [LARGE SCALE MRNA]</scope>
    <source>
        <strain>FVB/N</strain>
        <tissue>Liver</tissue>
    </source>
</reference>
<reference key="4">
    <citation type="journal article" date="2010" name="Cell">
        <title>A tissue-specific atlas of mouse protein phosphorylation and expression.</title>
        <authorList>
            <person name="Huttlin E.L."/>
            <person name="Jedrychowski M.P."/>
            <person name="Elias J.E."/>
            <person name="Goswami T."/>
            <person name="Rad R."/>
            <person name="Beausoleil S.A."/>
            <person name="Villen J."/>
            <person name="Haas W."/>
            <person name="Sowa M.E."/>
            <person name="Gygi S.P."/>
        </authorList>
    </citation>
    <scope>IDENTIFICATION BY MASS SPECTROMETRY [LARGE SCALE ANALYSIS]</scope>
    <source>
        <tissue>Brain</tissue>
        <tissue>Brown adipose tissue</tissue>
        <tissue>Heart</tissue>
        <tissue>Kidney</tissue>
        <tissue>Liver</tissue>
        <tissue>Lung</tissue>
        <tissue>Pancreas</tissue>
        <tissue>Spleen</tissue>
        <tissue>Testis</tissue>
    </source>
</reference>
<reference key="5">
    <citation type="journal article" date="2013" name="Mol. Cell">
        <title>SIRT5-mediated lysine desuccinylation impacts diverse metabolic pathways.</title>
        <authorList>
            <person name="Park J."/>
            <person name="Chen Y."/>
            <person name="Tishkoff D.X."/>
            <person name="Peng C."/>
            <person name="Tan M."/>
            <person name="Dai L."/>
            <person name="Xie Z."/>
            <person name="Zhang Y."/>
            <person name="Zwaans B.M."/>
            <person name="Skinner M.E."/>
            <person name="Lombard D.B."/>
            <person name="Zhao Y."/>
        </authorList>
    </citation>
    <scope>ACETYLATION [LARGE SCALE ANALYSIS] AT LYS-182</scope>
    <scope>SUCCINYLATION [LARGE SCALE ANALYSIS] AT LYS-182; LYS-478; LYS-544; LYS-570 AND LYS-599</scope>
    <scope>IDENTIFICATION BY MASS SPECTROMETRY [LARGE SCALE ANALYSIS]</scope>
    <source>
        <tissue>Embryonic fibroblast</tissue>
        <tissue>Liver</tissue>
    </source>
</reference>
<reference key="6">
    <citation type="journal article" date="2013" name="Proc. Natl. Acad. Sci. U.S.A.">
        <title>Label-free quantitative proteomics of the lysine acetylome in mitochondria identifies substrates of SIRT3 in metabolic pathways.</title>
        <authorList>
            <person name="Rardin M.J."/>
            <person name="Newman J.C."/>
            <person name="Held J.M."/>
            <person name="Cusack M.P."/>
            <person name="Sorensen D.J."/>
            <person name="Li B."/>
            <person name="Schilling B."/>
            <person name="Mooney S.D."/>
            <person name="Kahn C.R."/>
            <person name="Verdin E."/>
            <person name="Gibson B.W."/>
        </authorList>
    </citation>
    <scope>ACETYLATION [LARGE SCALE ANALYSIS] AT LYS-179; LYS-182; LYS-199; LYS-340; LYS-398; LYS-510; LYS-544 AND LYS-570</scope>
    <scope>IDENTIFICATION BY MASS SPECTROMETRY [LARGE SCALE ANALYSIS]</scope>
    <source>
        <tissue>Liver</tissue>
    </source>
</reference>
<organism>
    <name type="scientific">Mus musculus</name>
    <name type="common">Mouse</name>
    <dbReference type="NCBI Taxonomy" id="10090"/>
    <lineage>
        <taxon>Eukaryota</taxon>
        <taxon>Metazoa</taxon>
        <taxon>Chordata</taxon>
        <taxon>Craniata</taxon>
        <taxon>Vertebrata</taxon>
        <taxon>Euteleostomi</taxon>
        <taxon>Mammalia</taxon>
        <taxon>Eutheria</taxon>
        <taxon>Euarchontoglires</taxon>
        <taxon>Glires</taxon>
        <taxon>Rodentia</taxon>
        <taxon>Myomorpha</taxon>
        <taxon>Muroidea</taxon>
        <taxon>Muridae</taxon>
        <taxon>Murinae</taxon>
        <taxon>Mus</taxon>
        <taxon>Mus</taxon>
    </lineage>
</organism>
<keyword id="KW-0007">Acetylation</keyword>
<keyword id="KW-0067">ATP-binding</keyword>
<keyword id="KW-0276">Fatty acid metabolism</keyword>
<keyword id="KW-0436">Ligase</keyword>
<keyword id="KW-0443">Lipid metabolism</keyword>
<keyword id="KW-0496">Mitochondrion</keyword>
<keyword id="KW-0547">Nucleotide-binding</keyword>
<keyword id="KW-1185">Reference proteome</keyword>
<keyword id="KW-0809">Transit peptide</keyword>
<dbReference type="EC" id="6.2.1.2" evidence="2"/>
<dbReference type="EMBL" id="AK034209">
    <property type="protein sequence ID" value="BAC28632.1"/>
    <property type="molecule type" value="mRNA"/>
</dbReference>
<dbReference type="EMBL" id="AK153582">
    <property type="protein sequence ID" value="BAE32109.1"/>
    <property type="molecule type" value="mRNA"/>
</dbReference>
<dbReference type="EMBL" id="AK169987">
    <property type="protein sequence ID" value="BAE41499.1"/>
    <property type="molecule type" value="mRNA"/>
</dbReference>
<dbReference type="EMBL" id="AL645764">
    <property type="status" value="NOT_ANNOTATED_CDS"/>
    <property type="molecule type" value="Genomic_DNA"/>
</dbReference>
<dbReference type="EMBL" id="AL645809">
    <property type="status" value="NOT_ANNOTATED_CDS"/>
    <property type="molecule type" value="Genomic_DNA"/>
</dbReference>
<dbReference type="EMBL" id="BC018371">
    <property type="protein sequence ID" value="AAH18371.1"/>
    <property type="molecule type" value="mRNA"/>
</dbReference>
<dbReference type="EMBL" id="BC063269">
    <property type="protein sequence ID" value="AAH63269.1"/>
    <property type="molecule type" value="mRNA"/>
</dbReference>
<dbReference type="CCDS" id="CCDS25259.1"/>
<dbReference type="RefSeq" id="NP_722502.1">
    <property type="nucleotide sequence ID" value="NM_153807.2"/>
</dbReference>
<dbReference type="SMR" id="Q8VCW8"/>
<dbReference type="BioGRID" id="234459">
    <property type="interactions" value="5"/>
</dbReference>
<dbReference type="FunCoup" id="Q8VCW8">
    <property type="interactions" value="1094"/>
</dbReference>
<dbReference type="STRING" id="10090.ENSMUSP00000099453"/>
<dbReference type="GlyGen" id="Q8VCW8">
    <property type="glycosylation" value="1 site, 1 O-linked glycan (1 site)"/>
</dbReference>
<dbReference type="iPTMnet" id="Q8VCW8"/>
<dbReference type="PhosphoSitePlus" id="Q8VCW8"/>
<dbReference type="SwissPalm" id="Q8VCW8"/>
<dbReference type="jPOST" id="Q8VCW8"/>
<dbReference type="PaxDb" id="10090-ENSMUSP00000099453"/>
<dbReference type="PeptideAtlas" id="Q8VCW8"/>
<dbReference type="ProteomicsDB" id="285846"/>
<dbReference type="Pumba" id="Q8VCW8"/>
<dbReference type="Antibodypedia" id="30532">
    <property type="antibodies" value="139 antibodies from 24 providers"/>
</dbReference>
<dbReference type="DNASU" id="264895"/>
<dbReference type="Ensembl" id="ENSMUST00000103164.4">
    <property type="protein sequence ID" value="ENSMUSP00000099453.4"/>
    <property type="gene ID" value="ENSMUSG00000076435.4"/>
</dbReference>
<dbReference type="GeneID" id="264895"/>
<dbReference type="KEGG" id="mmu:264895"/>
<dbReference type="UCSC" id="uc007kzc.1">
    <property type="organism name" value="mouse"/>
</dbReference>
<dbReference type="AGR" id="MGI:2388287"/>
<dbReference type="CTD" id="80221"/>
<dbReference type="MGI" id="MGI:2388287">
    <property type="gene designation" value="Acsf2"/>
</dbReference>
<dbReference type="VEuPathDB" id="HostDB:ENSMUSG00000076435"/>
<dbReference type="eggNOG" id="KOG1177">
    <property type="taxonomic scope" value="Eukaryota"/>
</dbReference>
<dbReference type="GeneTree" id="ENSGT00940000156830"/>
<dbReference type="HOGENOM" id="CLU_000022_59_7_1"/>
<dbReference type="InParanoid" id="Q8VCW8"/>
<dbReference type="OMA" id="ICCRGYN"/>
<dbReference type="OrthoDB" id="10253115at2759"/>
<dbReference type="PhylomeDB" id="Q8VCW8"/>
<dbReference type="TreeFam" id="TF313466"/>
<dbReference type="Reactome" id="R-MMU-77289">
    <property type="pathway name" value="Mitochondrial Fatty Acid Beta-Oxidation"/>
</dbReference>
<dbReference type="BioGRID-ORCS" id="264895">
    <property type="hits" value="4 hits in 77 CRISPR screens"/>
</dbReference>
<dbReference type="ChiTaRS" id="Acsf2">
    <property type="organism name" value="mouse"/>
</dbReference>
<dbReference type="PRO" id="PR:Q8VCW8"/>
<dbReference type="Proteomes" id="UP000000589">
    <property type="component" value="Chromosome 11"/>
</dbReference>
<dbReference type="RNAct" id="Q8VCW8">
    <property type="molecule type" value="protein"/>
</dbReference>
<dbReference type="Bgee" id="ENSMUSG00000076435">
    <property type="expression patterns" value="Expressed in adrenal gland and 62 other cell types or tissues"/>
</dbReference>
<dbReference type="GO" id="GO:0005739">
    <property type="term" value="C:mitochondrion"/>
    <property type="evidence" value="ECO:0007005"/>
    <property type="project" value="MGI"/>
</dbReference>
<dbReference type="GO" id="GO:0005524">
    <property type="term" value="F:ATP binding"/>
    <property type="evidence" value="ECO:0007669"/>
    <property type="project" value="UniProtKB-KW"/>
</dbReference>
<dbReference type="GO" id="GO:0031956">
    <property type="term" value="F:medium-chain fatty acid-CoA ligase activity"/>
    <property type="evidence" value="ECO:0000250"/>
    <property type="project" value="UniProtKB"/>
</dbReference>
<dbReference type="GO" id="GO:0006631">
    <property type="term" value="P:fatty acid metabolic process"/>
    <property type="evidence" value="ECO:0007669"/>
    <property type="project" value="UniProtKB-KW"/>
</dbReference>
<dbReference type="CDD" id="cd05917">
    <property type="entry name" value="FACL_like_2"/>
    <property type="match status" value="1"/>
</dbReference>
<dbReference type="FunFam" id="3.30.300.30:FF:000008">
    <property type="entry name" value="2,3-dihydroxybenzoate-AMP ligase"/>
    <property type="match status" value="1"/>
</dbReference>
<dbReference type="FunFam" id="3.40.50.12780:FF:000003">
    <property type="entry name" value="Long-chain-fatty-acid--CoA ligase FadD"/>
    <property type="match status" value="1"/>
</dbReference>
<dbReference type="Gene3D" id="3.30.300.30">
    <property type="match status" value="1"/>
</dbReference>
<dbReference type="Gene3D" id="3.40.50.12780">
    <property type="entry name" value="N-terminal domain of ligase-like"/>
    <property type="match status" value="1"/>
</dbReference>
<dbReference type="InterPro" id="IPR025110">
    <property type="entry name" value="AMP-bd_C"/>
</dbReference>
<dbReference type="InterPro" id="IPR045851">
    <property type="entry name" value="AMP-bd_C_sf"/>
</dbReference>
<dbReference type="InterPro" id="IPR020845">
    <property type="entry name" value="AMP-binding_CS"/>
</dbReference>
<dbReference type="InterPro" id="IPR000873">
    <property type="entry name" value="AMP-dep_synth/lig_dom"/>
</dbReference>
<dbReference type="InterPro" id="IPR042099">
    <property type="entry name" value="ANL_N_sf"/>
</dbReference>
<dbReference type="PANTHER" id="PTHR43201">
    <property type="entry name" value="ACYL-COA SYNTHETASE"/>
    <property type="match status" value="1"/>
</dbReference>
<dbReference type="PANTHER" id="PTHR43201:SF5">
    <property type="entry name" value="MEDIUM-CHAIN ACYL-COA LIGASE ACSF2, MITOCHONDRIAL"/>
    <property type="match status" value="1"/>
</dbReference>
<dbReference type="Pfam" id="PF00501">
    <property type="entry name" value="AMP-binding"/>
    <property type="match status" value="1"/>
</dbReference>
<dbReference type="Pfam" id="PF13193">
    <property type="entry name" value="AMP-binding_C"/>
    <property type="match status" value="1"/>
</dbReference>
<dbReference type="SUPFAM" id="SSF56801">
    <property type="entry name" value="Acetyl-CoA synthetase-like"/>
    <property type="match status" value="1"/>
</dbReference>
<dbReference type="PROSITE" id="PS00455">
    <property type="entry name" value="AMP_BINDING"/>
    <property type="match status" value="1"/>
</dbReference>
<gene>
    <name evidence="5" type="primary">Acsf2</name>
</gene>